<name>NDK_BURM1</name>
<sequence>MAIERTLSIIKPDAVAKNVIGQIYSRFEGAGLKIVAARMAHLSRADAEKFYAVHAARPFFKDLVDFMISGPVMIQVLEGEGAILKNRDLMGATDPKKAEKGTIRADFADSIDANAVHGSDAPETAAVEIAFFFPEMNVYSR</sequence>
<evidence type="ECO:0000255" key="1">
    <source>
        <dbReference type="HAMAP-Rule" id="MF_00451"/>
    </source>
</evidence>
<accession>A9AGZ3</accession>
<feature type="chain" id="PRO_1000124939" description="Nucleoside diphosphate kinase">
    <location>
        <begin position="1"/>
        <end position="141"/>
    </location>
</feature>
<feature type="active site" description="Pros-phosphohistidine intermediate" evidence="1">
    <location>
        <position position="117"/>
    </location>
</feature>
<feature type="binding site" evidence="1">
    <location>
        <position position="11"/>
    </location>
    <ligand>
        <name>ATP</name>
        <dbReference type="ChEBI" id="CHEBI:30616"/>
    </ligand>
</feature>
<feature type="binding site" evidence="1">
    <location>
        <position position="59"/>
    </location>
    <ligand>
        <name>ATP</name>
        <dbReference type="ChEBI" id="CHEBI:30616"/>
    </ligand>
</feature>
<feature type="binding site" evidence="1">
    <location>
        <position position="87"/>
    </location>
    <ligand>
        <name>ATP</name>
        <dbReference type="ChEBI" id="CHEBI:30616"/>
    </ligand>
</feature>
<feature type="binding site" evidence="1">
    <location>
        <position position="93"/>
    </location>
    <ligand>
        <name>ATP</name>
        <dbReference type="ChEBI" id="CHEBI:30616"/>
    </ligand>
</feature>
<feature type="binding site" evidence="1">
    <location>
        <position position="104"/>
    </location>
    <ligand>
        <name>ATP</name>
        <dbReference type="ChEBI" id="CHEBI:30616"/>
    </ligand>
</feature>
<feature type="binding site" evidence="1">
    <location>
        <position position="114"/>
    </location>
    <ligand>
        <name>ATP</name>
        <dbReference type="ChEBI" id="CHEBI:30616"/>
    </ligand>
</feature>
<organism>
    <name type="scientific">Burkholderia multivorans (strain ATCC 17616 / 249)</name>
    <dbReference type="NCBI Taxonomy" id="395019"/>
    <lineage>
        <taxon>Bacteria</taxon>
        <taxon>Pseudomonadati</taxon>
        <taxon>Pseudomonadota</taxon>
        <taxon>Betaproteobacteria</taxon>
        <taxon>Burkholderiales</taxon>
        <taxon>Burkholderiaceae</taxon>
        <taxon>Burkholderia</taxon>
        <taxon>Burkholderia cepacia complex</taxon>
    </lineage>
</organism>
<protein>
    <recommendedName>
        <fullName evidence="1">Nucleoside diphosphate kinase</fullName>
        <shortName evidence="1">NDK</shortName>
        <shortName evidence="1">NDP kinase</shortName>
        <ecNumber evidence="1">2.7.4.6</ecNumber>
    </recommendedName>
    <alternativeName>
        <fullName evidence="1">Nucleoside-2-P kinase</fullName>
    </alternativeName>
</protein>
<keyword id="KW-0067">ATP-binding</keyword>
<keyword id="KW-0963">Cytoplasm</keyword>
<keyword id="KW-0418">Kinase</keyword>
<keyword id="KW-0460">Magnesium</keyword>
<keyword id="KW-0479">Metal-binding</keyword>
<keyword id="KW-0546">Nucleotide metabolism</keyword>
<keyword id="KW-0547">Nucleotide-binding</keyword>
<keyword id="KW-0597">Phosphoprotein</keyword>
<keyword id="KW-1185">Reference proteome</keyword>
<keyword id="KW-0808">Transferase</keyword>
<proteinExistence type="inferred from homology"/>
<reference key="1">
    <citation type="submission" date="2007-10" db="EMBL/GenBank/DDBJ databases">
        <title>Complete sequence of chromosome 1 of Burkholderia multivorans ATCC 17616.</title>
        <authorList>
            <person name="Copeland A."/>
            <person name="Lucas S."/>
            <person name="Lapidus A."/>
            <person name="Barry K."/>
            <person name="Glavina del Rio T."/>
            <person name="Dalin E."/>
            <person name="Tice H."/>
            <person name="Pitluck S."/>
            <person name="Chain P."/>
            <person name="Malfatti S."/>
            <person name="Shin M."/>
            <person name="Vergez L."/>
            <person name="Schmutz J."/>
            <person name="Larimer F."/>
            <person name="Land M."/>
            <person name="Hauser L."/>
            <person name="Kyrpides N."/>
            <person name="Kim E."/>
            <person name="Tiedje J."/>
            <person name="Richardson P."/>
        </authorList>
    </citation>
    <scope>NUCLEOTIDE SEQUENCE [LARGE SCALE GENOMIC DNA]</scope>
    <source>
        <strain>ATCC 17616 / 249</strain>
    </source>
</reference>
<reference key="2">
    <citation type="submission" date="2007-04" db="EMBL/GenBank/DDBJ databases">
        <title>Complete genome sequence of Burkholderia multivorans ATCC 17616.</title>
        <authorList>
            <person name="Ohtsubo Y."/>
            <person name="Yamashita A."/>
            <person name="Kurokawa K."/>
            <person name="Takami H."/>
            <person name="Yuhara S."/>
            <person name="Nishiyama E."/>
            <person name="Endo R."/>
            <person name="Miyazaki R."/>
            <person name="Ono A."/>
            <person name="Yano K."/>
            <person name="Ito M."/>
            <person name="Sota M."/>
            <person name="Yuji N."/>
            <person name="Hattori M."/>
            <person name="Tsuda M."/>
        </authorList>
    </citation>
    <scope>NUCLEOTIDE SEQUENCE [LARGE SCALE GENOMIC DNA]</scope>
    <source>
        <strain>ATCC 17616 / 249</strain>
    </source>
</reference>
<comment type="function">
    <text evidence="1">Major role in the synthesis of nucleoside triphosphates other than ATP. The ATP gamma phosphate is transferred to the NDP beta phosphate via a ping-pong mechanism, using a phosphorylated active-site intermediate.</text>
</comment>
<comment type="catalytic activity">
    <reaction evidence="1">
        <text>a 2'-deoxyribonucleoside 5'-diphosphate + ATP = a 2'-deoxyribonucleoside 5'-triphosphate + ADP</text>
        <dbReference type="Rhea" id="RHEA:44640"/>
        <dbReference type="ChEBI" id="CHEBI:30616"/>
        <dbReference type="ChEBI" id="CHEBI:61560"/>
        <dbReference type="ChEBI" id="CHEBI:73316"/>
        <dbReference type="ChEBI" id="CHEBI:456216"/>
        <dbReference type="EC" id="2.7.4.6"/>
    </reaction>
</comment>
<comment type="catalytic activity">
    <reaction evidence="1">
        <text>a ribonucleoside 5'-diphosphate + ATP = a ribonucleoside 5'-triphosphate + ADP</text>
        <dbReference type="Rhea" id="RHEA:18113"/>
        <dbReference type="ChEBI" id="CHEBI:30616"/>
        <dbReference type="ChEBI" id="CHEBI:57930"/>
        <dbReference type="ChEBI" id="CHEBI:61557"/>
        <dbReference type="ChEBI" id="CHEBI:456216"/>
        <dbReference type="EC" id="2.7.4.6"/>
    </reaction>
</comment>
<comment type="cofactor">
    <cofactor evidence="1">
        <name>Mg(2+)</name>
        <dbReference type="ChEBI" id="CHEBI:18420"/>
    </cofactor>
</comment>
<comment type="subunit">
    <text evidence="1">Homotetramer.</text>
</comment>
<comment type="subcellular location">
    <subcellularLocation>
        <location evidence="1">Cytoplasm</location>
    </subcellularLocation>
</comment>
<comment type="similarity">
    <text evidence="1">Belongs to the NDK family.</text>
</comment>
<dbReference type="EC" id="2.7.4.6" evidence="1"/>
<dbReference type="EMBL" id="CP000868">
    <property type="protein sequence ID" value="ABX15148.1"/>
    <property type="molecule type" value="Genomic_DNA"/>
</dbReference>
<dbReference type="EMBL" id="AP009385">
    <property type="protein sequence ID" value="BAG43703.1"/>
    <property type="molecule type" value="Genomic_DNA"/>
</dbReference>
<dbReference type="RefSeq" id="WP_006399902.1">
    <property type="nucleotide sequence ID" value="NC_010804.1"/>
</dbReference>
<dbReference type="SMR" id="A9AGZ3"/>
<dbReference type="STRING" id="395019.BMULJ_01783"/>
<dbReference type="GeneID" id="89570264"/>
<dbReference type="KEGG" id="bmj:BMULJ_01783"/>
<dbReference type="KEGG" id="bmu:Bmul_1460"/>
<dbReference type="eggNOG" id="COG0105">
    <property type="taxonomic scope" value="Bacteria"/>
</dbReference>
<dbReference type="HOGENOM" id="CLU_060216_8_1_4"/>
<dbReference type="Proteomes" id="UP000008815">
    <property type="component" value="Chromosome 1"/>
</dbReference>
<dbReference type="GO" id="GO:0005737">
    <property type="term" value="C:cytoplasm"/>
    <property type="evidence" value="ECO:0007669"/>
    <property type="project" value="UniProtKB-SubCell"/>
</dbReference>
<dbReference type="GO" id="GO:0005524">
    <property type="term" value="F:ATP binding"/>
    <property type="evidence" value="ECO:0007669"/>
    <property type="project" value="UniProtKB-UniRule"/>
</dbReference>
<dbReference type="GO" id="GO:0046872">
    <property type="term" value="F:metal ion binding"/>
    <property type="evidence" value="ECO:0007669"/>
    <property type="project" value="UniProtKB-KW"/>
</dbReference>
<dbReference type="GO" id="GO:0004550">
    <property type="term" value="F:nucleoside diphosphate kinase activity"/>
    <property type="evidence" value="ECO:0007669"/>
    <property type="project" value="UniProtKB-UniRule"/>
</dbReference>
<dbReference type="GO" id="GO:0006241">
    <property type="term" value="P:CTP biosynthetic process"/>
    <property type="evidence" value="ECO:0007669"/>
    <property type="project" value="UniProtKB-UniRule"/>
</dbReference>
<dbReference type="GO" id="GO:0006183">
    <property type="term" value="P:GTP biosynthetic process"/>
    <property type="evidence" value="ECO:0007669"/>
    <property type="project" value="UniProtKB-UniRule"/>
</dbReference>
<dbReference type="GO" id="GO:0006228">
    <property type="term" value="P:UTP biosynthetic process"/>
    <property type="evidence" value="ECO:0007669"/>
    <property type="project" value="UniProtKB-UniRule"/>
</dbReference>
<dbReference type="CDD" id="cd04413">
    <property type="entry name" value="NDPk_I"/>
    <property type="match status" value="1"/>
</dbReference>
<dbReference type="FunFam" id="3.30.70.141:FF:000001">
    <property type="entry name" value="Nucleoside diphosphate kinase"/>
    <property type="match status" value="1"/>
</dbReference>
<dbReference type="Gene3D" id="3.30.70.141">
    <property type="entry name" value="Nucleoside diphosphate kinase-like domain"/>
    <property type="match status" value="1"/>
</dbReference>
<dbReference type="HAMAP" id="MF_00451">
    <property type="entry name" value="NDP_kinase"/>
    <property type="match status" value="1"/>
</dbReference>
<dbReference type="InterPro" id="IPR034907">
    <property type="entry name" value="NDK-like_dom"/>
</dbReference>
<dbReference type="InterPro" id="IPR036850">
    <property type="entry name" value="NDK-like_dom_sf"/>
</dbReference>
<dbReference type="InterPro" id="IPR001564">
    <property type="entry name" value="Nucleoside_diP_kinase"/>
</dbReference>
<dbReference type="InterPro" id="IPR023005">
    <property type="entry name" value="Nucleoside_diP_kinase_AS"/>
</dbReference>
<dbReference type="NCBIfam" id="NF001908">
    <property type="entry name" value="PRK00668.1"/>
    <property type="match status" value="1"/>
</dbReference>
<dbReference type="PANTHER" id="PTHR46161">
    <property type="entry name" value="NUCLEOSIDE DIPHOSPHATE KINASE"/>
    <property type="match status" value="1"/>
</dbReference>
<dbReference type="PANTHER" id="PTHR46161:SF3">
    <property type="entry name" value="NUCLEOSIDE DIPHOSPHATE KINASE DDB_G0292928-RELATED"/>
    <property type="match status" value="1"/>
</dbReference>
<dbReference type="Pfam" id="PF00334">
    <property type="entry name" value="NDK"/>
    <property type="match status" value="1"/>
</dbReference>
<dbReference type="PRINTS" id="PR01243">
    <property type="entry name" value="NUCDPKINASE"/>
</dbReference>
<dbReference type="SMART" id="SM00562">
    <property type="entry name" value="NDK"/>
    <property type="match status" value="1"/>
</dbReference>
<dbReference type="SUPFAM" id="SSF54919">
    <property type="entry name" value="Nucleoside diphosphate kinase, NDK"/>
    <property type="match status" value="1"/>
</dbReference>
<dbReference type="PROSITE" id="PS00469">
    <property type="entry name" value="NDPK"/>
    <property type="match status" value="1"/>
</dbReference>
<dbReference type="PROSITE" id="PS51374">
    <property type="entry name" value="NDPK_LIKE"/>
    <property type="match status" value="1"/>
</dbReference>
<gene>
    <name evidence="1" type="primary">ndk</name>
    <name type="ordered locus">Bmul_1460</name>
    <name type="ordered locus">BMULJ_01783</name>
</gene>